<gene>
    <name type="ordered locus">RP088</name>
</gene>
<organism>
    <name type="scientific">Rickettsia prowazekii (strain Madrid E)</name>
    <dbReference type="NCBI Taxonomy" id="272947"/>
    <lineage>
        <taxon>Bacteria</taxon>
        <taxon>Pseudomonadati</taxon>
        <taxon>Pseudomonadota</taxon>
        <taxon>Alphaproteobacteria</taxon>
        <taxon>Rickettsiales</taxon>
        <taxon>Rickettsiaceae</taxon>
        <taxon>Rickettsieae</taxon>
        <taxon>Rickettsia</taxon>
        <taxon>typhus group</taxon>
    </lineage>
</organism>
<protein>
    <recommendedName>
        <fullName>Uncharacterized protein RP088</fullName>
    </recommendedName>
</protein>
<accession>Q9ZE59</accession>
<dbReference type="EMBL" id="AJ235270">
    <property type="protein sequence ID" value="CAA14558.1"/>
    <property type="molecule type" value="Genomic_DNA"/>
</dbReference>
<dbReference type="PIR" id="G71717">
    <property type="entry name" value="G71717"/>
</dbReference>
<dbReference type="RefSeq" id="NP_220481.1">
    <property type="nucleotide sequence ID" value="NC_000963.1"/>
</dbReference>
<dbReference type="RefSeq" id="WP_004596514.1">
    <property type="nucleotide sequence ID" value="NC_000963.1"/>
</dbReference>
<dbReference type="SMR" id="Q9ZE59"/>
<dbReference type="EnsemblBacteria" id="CAA14558">
    <property type="protein sequence ID" value="CAA14558"/>
    <property type="gene ID" value="CAA14558"/>
</dbReference>
<dbReference type="KEGG" id="rpr:RP088"/>
<dbReference type="PATRIC" id="fig|272947.5.peg.88"/>
<dbReference type="HOGENOM" id="CLU_2957758_0_0_5"/>
<dbReference type="Proteomes" id="UP000002480">
    <property type="component" value="Chromosome"/>
</dbReference>
<keyword id="KW-1185">Reference proteome</keyword>
<keyword id="KW-0732">Signal</keyword>
<evidence type="ECO:0000255" key="1"/>
<proteinExistence type="inferred from homology"/>
<reference key="1">
    <citation type="journal article" date="1998" name="Nature">
        <title>The genome sequence of Rickettsia prowazekii and the origin of mitochondria.</title>
        <authorList>
            <person name="Andersson S.G.E."/>
            <person name="Zomorodipour A."/>
            <person name="Andersson J.O."/>
            <person name="Sicheritz-Ponten T."/>
            <person name="Alsmark U.C.M."/>
            <person name="Podowski R.M."/>
            <person name="Naeslund A.K."/>
            <person name="Eriksson A.-S."/>
            <person name="Winkler H.H."/>
            <person name="Kurland C.G."/>
        </authorList>
    </citation>
    <scope>NUCLEOTIDE SEQUENCE [LARGE SCALE GENOMIC DNA]</scope>
    <source>
        <strain>Madrid E</strain>
    </source>
</reference>
<sequence>MIASIWYAELGCASAIAFIFPLIFCVKLDYKCIGIFIINSLHDQYYKPDIMLERAIIIA</sequence>
<name>Y088_RICPR</name>
<feature type="signal peptide" evidence="1">
    <location>
        <begin position="1"/>
        <end position="17"/>
    </location>
</feature>
<feature type="chain" id="PRO_0000014222" description="Uncharacterized protein RP088">
    <location>
        <begin position="18"/>
        <end position="59"/>
    </location>
</feature>